<dbReference type="EMBL" id="CP000480">
    <property type="protein sequence ID" value="ABK75695.1"/>
    <property type="molecule type" value="Genomic_DNA"/>
</dbReference>
<dbReference type="EMBL" id="CP001663">
    <property type="protein sequence ID" value="AFP39030.1"/>
    <property type="status" value="ALT_INIT"/>
    <property type="molecule type" value="Genomic_DNA"/>
</dbReference>
<dbReference type="RefSeq" id="WP_011728481.1">
    <property type="nucleotide sequence ID" value="NZ_SIJM01000029.1"/>
</dbReference>
<dbReference type="RefSeq" id="YP_886961.1">
    <property type="nucleotide sequence ID" value="NC_008596.1"/>
</dbReference>
<dbReference type="PDB" id="5GL6">
    <property type="method" value="X-ray"/>
    <property type="resolution" value="2.20 A"/>
    <property type="chains" value="A/B=1-181"/>
</dbReference>
<dbReference type="PDBsum" id="5GL6"/>
<dbReference type="SMR" id="A0QVM3"/>
<dbReference type="STRING" id="246196.MSMEG_2624"/>
<dbReference type="PaxDb" id="246196-MSMEI_2562"/>
<dbReference type="GeneID" id="93457411"/>
<dbReference type="KEGG" id="msb:LJ00_13060"/>
<dbReference type="KEGG" id="msg:MSMEI_2562"/>
<dbReference type="KEGG" id="msm:MSMEG_2624"/>
<dbReference type="PATRIC" id="fig|246196.19.peg.2590"/>
<dbReference type="eggNOG" id="COG0779">
    <property type="taxonomic scope" value="Bacteria"/>
</dbReference>
<dbReference type="OrthoDB" id="9805006at2"/>
<dbReference type="Proteomes" id="UP000000757">
    <property type="component" value="Chromosome"/>
</dbReference>
<dbReference type="Proteomes" id="UP000006158">
    <property type="component" value="Chromosome"/>
</dbReference>
<dbReference type="GO" id="GO:0005829">
    <property type="term" value="C:cytosol"/>
    <property type="evidence" value="ECO:0007669"/>
    <property type="project" value="TreeGrafter"/>
</dbReference>
<dbReference type="GO" id="GO:0000028">
    <property type="term" value="P:ribosomal small subunit assembly"/>
    <property type="evidence" value="ECO:0007669"/>
    <property type="project" value="TreeGrafter"/>
</dbReference>
<dbReference type="GO" id="GO:0006412">
    <property type="term" value="P:translation"/>
    <property type="evidence" value="ECO:0007669"/>
    <property type="project" value="TreeGrafter"/>
</dbReference>
<dbReference type="CDD" id="cd01734">
    <property type="entry name" value="YlxS_C"/>
    <property type="match status" value="1"/>
</dbReference>
<dbReference type="Gene3D" id="3.30.300.70">
    <property type="entry name" value="RimP-like superfamily, N-terminal"/>
    <property type="match status" value="1"/>
</dbReference>
<dbReference type="HAMAP" id="MF_01077">
    <property type="entry name" value="RimP"/>
    <property type="match status" value="1"/>
</dbReference>
<dbReference type="InterPro" id="IPR003728">
    <property type="entry name" value="Ribosome_maturation_RimP"/>
</dbReference>
<dbReference type="InterPro" id="IPR028998">
    <property type="entry name" value="RimP_C"/>
</dbReference>
<dbReference type="InterPro" id="IPR036847">
    <property type="entry name" value="RimP_C_sf"/>
</dbReference>
<dbReference type="InterPro" id="IPR028989">
    <property type="entry name" value="RimP_N"/>
</dbReference>
<dbReference type="InterPro" id="IPR035956">
    <property type="entry name" value="RimP_N_sf"/>
</dbReference>
<dbReference type="NCBIfam" id="NF000930">
    <property type="entry name" value="PRK00092.2-2"/>
    <property type="match status" value="1"/>
</dbReference>
<dbReference type="PANTHER" id="PTHR33867">
    <property type="entry name" value="RIBOSOME MATURATION FACTOR RIMP"/>
    <property type="match status" value="1"/>
</dbReference>
<dbReference type="PANTHER" id="PTHR33867:SF1">
    <property type="entry name" value="RIBOSOME MATURATION FACTOR RIMP"/>
    <property type="match status" value="1"/>
</dbReference>
<dbReference type="Pfam" id="PF17384">
    <property type="entry name" value="DUF150_C"/>
    <property type="match status" value="1"/>
</dbReference>
<dbReference type="Pfam" id="PF02576">
    <property type="entry name" value="RimP_N"/>
    <property type="match status" value="1"/>
</dbReference>
<dbReference type="SUPFAM" id="SSF74942">
    <property type="entry name" value="YhbC-like, C-terminal domain"/>
    <property type="match status" value="1"/>
</dbReference>
<dbReference type="SUPFAM" id="SSF75420">
    <property type="entry name" value="YhbC-like, N-terminal domain"/>
    <property type="match status" value="1"/>
</dbReference>
<feature type="chain" id="PRO_0000384710" description="Ribosome maturation factor RimP">
    <location>
        <begin position="1"/>
        <end position="181"/>
    </location>
</feature>
<feature type="helix" evidence="3">
    <location>
        <begin position="15"/>
        <end position="28"/>
    </location>
</feature>
<feature type="strand" evidence="3">
    <location>
        <begin position="32"/>
        <end position="39"/>
    </location>
</feature>
<feature type="strand" evidence="3">
    <location>
        <begin position="41"/>
        <end position="52"/>
    </location>
</feature>
<feature type="helix" evidence="3">
    <location>
        <begin position="59"/>
        <end position="74"/>
    </location>
</feature>
<feature type="strand" evidence="3">
    <location>
        <begin position="83"/>
        <end position="88"/>
    </location>
</feature>
<feature type="helix" evidence="3">
    <location>
        <begin position="99"/>
        <end position="104"/>
    </location>
</feature>
<feature type="turn" evidence="3">
    <location>
        <begin position="105"/>
        <end position="107"/>
    </location>
</feature>
<feature type="strand" evidence="3">
    <location>
        <begin position="109"/>
        <end position="114"/>
    </location>
</feature>
<feature type="strand" evidence="3">
    <location>
        <begin position="119"/>
        <end position="128"/>
    </location>
</feature>
<feature type="strand" evidence="3">
    <location>
        <begin position="131"/>
        <end position="138"/>
    </location>
</feature>
<feature type="strand" evidence="3">
    <location>
        <begin position="141"/>
        <end position="148"/>
    </location>
</feature>
<feature type="helix" evidence="3">
    <location>
        <begin position="149"/>
        <end position="151"/>
    </location>
</feature>
<feature type="strand" evidence="3">
    <location>
        <begin position="152"/>
        <end position="157"/>
    </location>
</feature>
<feature type="helix" evidence="3">
    <location>
        <begin position="166"/>
        <end position="173"/>
    </location>
</feature>
<feature type="strand" evidence="3">
    <location>
        <begin position="175"/>
        <end position="177"/>
    </location>
</feature>
<reference key="1">
    <citation type="submission" date="2006-10" db="EMBL/GenBank/DDBJ databases">
        <authorList>
            <person name="Fleischmann R.D."/>
            <person name="Dodson R.J."/>
            <person name="Haft D.H."/>
            <person name="Merkel J.S."/>
            <person name="Nelson W.C."/>
            <person name="Fraser C.M."/>
        </authorList>
    </citation>
    <scope>NUCLEOTIDE SEQUENCE [LARGE SCALE GENOMIC DNA]</scope>
    <source>
        <strain>ATCC 700084 / mc(2)155</strain>
    </source>
</reference>
<reference key="2">
    <citation type="journal article" date="2007" name="Genome Biol.">
        <title>Interrupted coding sequences in Mycobacterium smegmatis: authentic mutations or sequencing errors?</title>
        <authorList>
            <person name="Deshayes C."/>
            <person name="Perrodou E."/>
            <person name="Gallien S."/>
            <person name="Euphrasie D."/>
            <person name="Schaeffer C."/>
            <person name="Van-Dorsselaer A."/>
            <person name="Poch O."/>
            <person name="Lecompte O."/>
            <person name="Reyrat J.-M."/>
        </authorList>
    </citation>
    <scope>NUCLEOTIDE SEQUENCE [LARGE SCALE GENOMIC DNA]</scope>
    <source>
        <strain>ATCC 700084 / mc(2)155</strain>
    </source>
</reference>
<reference key="3">
    <citation type="journal article" date="2009" name="Genome Res.">
        <title>Ortho-proteogenomics: multiple proteomes investigation through orthology and a new MS-based protocol.</title>
        <authorList>
            <person name="Gallien S."/>
            <person name="Perrodou E."/>
            <person name="Carapito C."/>
            <person name="Deshayes C."/>
            <person name="Reyrat J.-M."/>
            <person name="Van Dorsselaer A."/>
            <person name="Poch O."/>
            <person name="Schaeffer C."/>
            <person name="Lecompte O."/>
        </authorList>
    </citation>
    <scope>NUCLEOTIDE SEQUENCE [LARGE SCALE GENOMIC DNA]</scope>
    <source>
        <strain>ATCC 700084 / mc(2)155</strain>
    </source>
</reference>
<comment type="function">
    <text evidence="1">Required for maturation of 30S ribosomal subunits.</text>
</comment>
<comment type="subcellular location">
    <subcellularLocation>
        <location evidence="1">Cytoplasm</location>
    </subcellularLocation>
</comment>
<comment type="similarity">
    <text evidence="1">Belongs to the RimP family.</text>
</comment>
<comment type="sequence caution" evidence="2">
    <conflict type="erroneous initiation">
        <sequence resource="EMBL-CDS" id="AFP39030"/>
    </conflict>
    <text>Truncated N-terminus.</text>
</comment>
<protein>
    <recommendedName>
        <fullName evidence="1">Ribosome maturation factor RimP</fullName>
    </recommendedName>
</protein>
<evidence type="ECO:0000255" key="1">
    <source>
        <dbReference type="HAMAP-Rule" id="MF_01077"/>
    </source>
</evidence>
<evidence type="ECO:0000305" key="2"/>
<evidence type="ECO:0007829" key="3">
    <source>
        <dbReference type="PDB" id="5GL6"/>
    </source>
</evidence>
<name>RIMP_MYCS2</name>
<gene>
    <name evidence="1" type="primary">rimP</name>
    <name type="ordered locus">MSMEG_2624</name>
    <name type="ordered locus">MSMEI_2562</name>
</gene>
<accession>A0QVM3</accession>
<accession>I7FBX3</accession>
<organism>
    <name type="scientific">Mycolicibacterium smegmatis (strain ATCC 700084 / mc(2)155)</name>
    <name type="common">Mycobacterium smegmatis</name>
    <dbReference type="NCBI Taxonomy" id="246196"/>
    <lineage>
        <taxon>Bacteria</taxon>
        <taxon>Bacillati</taxon>
        <taxon>Actinomycetota</taxon>
        <taxon>Actinomycetes</taxon>
        <taxon>Mycobacteriales</taxon>
        <taxon>Mycobacteriaceae</taxon>
        <taxon>Mycolicibacterium</taxon>
    </lineage>
</organism>
<sequence>MAPDPKLPSADLPSQKQVIELLDGEFARAGYEIDDVVVNAATRPARITIVADGDKGLDLDAVAMLSRLASGLLDTVDTGDTPYVLEVTSPGVDRPLTTEKHFRRARGRKAELSLADGSSLTARLGGTDGDQVNVVVAQGKDFAVRQIPLREITKAVVQVEFSPPNRRELELAEQTGKGARA</sequence>
<proteinExistence type="evidence at protein level"/>
<keyword id="KW-0002">3D-structure</keyword>
<keyword id="KW-0963">Cytoplasm</keyword>
<keyword id="KW-1185">Reference proteome</keyword>
<keyword id="KW-0690">Ribosome biogenesis</keyword>